<name>PCKA_SHEB2</name>
<feature type="chain" id="PRO_1000192332" description="Phosphoenolpyruvate carboxykinase (ATP)">
    <location>
        <begin position="1"/>
        <end position="513"/>
    </location>
</feature>
<feature type="binding site" evidence="1">
    <location>
        <position position="45"/>
    </location>
    <ligand>
        <name>substrate</name>
    </ligand>
</feature>
<feature type="binding site" evidence="1">
    <location>
        <position position="179"/>
    </location>
    <ligand>
        <name>substrate</name>
    </ligand>
</feature>
<feature type="binding site" evidence="1">
    <location>
        <position position="185"/>
    </location>
    <ligand>
        <name>ATP</name>
        <dbReference type="ChEBI" id="CHEBI:30616"/>
    </ligand>
</feature>
<feature type="binding site" evidence="1">
    <location>
        <position position="185"/>
    </location>
    <ligand>
        <name>Mn(2+)</name>
        <dbReference type="ChEBI" id="CHEBI:29035"/>
    </ligand>
</feature>
<feature type="binding site" evidence="1">
    <location>
        <position position="185"/>
    </location>
    <ligand>
        <name>substrate</name>
    </ligand>
</feature>
<feature type="binding site" evidence="1">
    <location>
        <position position="204"/>
    </location>
    <ligand>
        <name>ATP</name>
        <dbReference type="ChEBI" id="CHEBI:30616"/>
    </ligand>
</feature>
<feature type="binding site" evidence="1">
    <location>
        <position position="204"/>
    </location>
    <ligand>
        <name>Mn(2+)</name>
        <dbReference type="ChEBI" id="CHEBI:29035"/>
    </ligand>
</feature>
<feature type="binding site" evidence="1">
    <location>
        <begin position="220"/>
        <end position="228"/>
    </location>
    <ligand>
        <name>ATP</name>
        <dbReference type="ChEBI" id="CHEBI:30616"/>
    </ligand>
</feature>
<feature type="binding site" evidence="1">
    <location>
        <position position="241"/>
    </location>
    <ligand>
        <name>Mn(2+)</name>
        <dbReference type="ChEBI" id="CHEBI:29035"/>
    </ligand>
</feature>
<feature type="binding site" evidence="1">
    <location>
        <position position="269"/>
    </location>
    <ligand>
        <name>ATP</name>
        <dbReference type="ChEBI" id="CHEBI:30616"/>
    </ligand>
</feature>
<feature type="binding site" evidence="1">
    <location>
        <position position="305"/>
    </location>
    <ligand>
        <name>ATP</name>
        <dbReference type="ChEBI" id="CHEBI:30616"/>
    </ligand>
</feature>
<feature type="binding site" evidence="1">
    <location>
        <position position="305"/>
    </location>
    <ligand>
        <name>substrate</name>
    </ligand>
</feature>
<feature type="binding site" evidence="1">
    <location>
        <position position="431"/>
    </location>
    <ligand>
        <name>ATP</name>
        <dbReference type="ChEBI" id="CHEBI:30616"/>
    </ligand>
</feature>
<comment type="function">
    <text evidence="1">Involved in the gluconeogenesis. Catalyzes the conversion of oxaloacetate (OAA) to phosphoenolpyruvate (PEP) through direct phosphoryl transfer between the nucleoside triphosphate and OAA.</text>
</comment>
<comment type="catalytic activity">
    <reaction evidence="1">
        <text>oxaloacetate + ATP = phosphoenolpyruvate + ADP + CO2</text>
        <dbReference type="Rhea" id="RHEA:18617"/>
        <dbReference type="ChEBI" id="CHEBI:16452"/>
        <dbReference type="ChEBI" id="CHEBI:16526"/>
        <dbReference type="ChEBI" id="CHEBI:30616"/>
        <dbReference type="ChEBI" id="CHEBI:58702"/>
        <dbReference type="ChEBI" id="CHEBI:456216"/>
        <dbReference type="EC" id="4.1.1.49"/>
    </reaction>
</comment>
<comment type="cofactor">
    <cofactor evidence="1">
        <name>Mn(2+)</name>
        <dbReference type="ChEBI" id="CHEBI:29035"/>
    </cofactor>
    <text evidence="1">Binds 1 Mn(2+) ion per subunit.</text>
</comment>
<comment type="pathway">
    <text evidence="1">Carbohydrate biosynthesis; gluconeogenesis.</text>
</comment>
<comment type="subunit">
    <text evidence="1">Monomer.</text>
</comment>
<comment type="subcellular location">
    <subcellularLocation>
        <location evidence="1">Cytoplasm</location>
    </subcellularLocation>
</comment>
<comment type="similarity">
    <text evidence="1">Belongs to the phosphoenolpyruvate carboxykinase (ATP) family.</text>
</comment>
<gene>
    <name evidence="1" type="primary">pckA</name>
    <name type="ordered locus">Sbal223_0148</name>
</gene>
<proteinExistence type="inferred from homology"/>
<accession>B8E3X7</accession>
<keyword id="KW-0067">ATP-binding</keyword>
<keyword id="KW-0963">Cytoplasm</keyword>
<keyword id="KW-0210">Decarboxylase</keyword>
<keyword id="KW-0312">Gluconeogenesis</keyword>
<keyword id="KW-0456">Lyase</keyword>
<keyword id="KW-0464">Manganese</keyword>
<keyword id="KW-0479">Metal-binding</keyword>
<keyword id="KW-0547">Nucleotide-binding</keyword>
<protein>
    <recommendedName>
        <fullName evidence="1">Phosphoenolpyruvate carboxykinase (ATP)</fullName>
        <shortName evidence="1">PCK</shortName>
        <shortName evidence="1">PEP carboxykinase</shortName>
        <shortName evidence="1">PEPCK</shortName>
        <ecNumber evidence="1">4.1.1.49</ecNumber>
    </recommendedName>
</protein>
<sequence>MADGLNRVHFNPSTAQLVEFALLRGEGELTANGALVAKTGARSGRSPGDRFIVREPSSEAEIEWGPVNQAFDPGAFEGLWARVEAYLADKELFVSDLEVGADTEHYQPVRVTTQYAWHQLFARNLFIIPEEFNRKDKPVWQIINAPDFVCDPARDGTNSDATVILNFAERKVLLAGLKYAGEMKKSMFSVQNFLLPAQGVLPMHCSANVGKDGDTTLFFGLSGTGKTTLSADPKRFLIGDDEHGWAPGGVFNIEGGCYAKCIDLSQKNEPVIWDAIRFGTVLENVVMDKHRVPNYKDSSLTENTRAAYPLEHIAQRKEDNCGAEPHAVVFLTCDVSGVLPPVSILTKEQAAYHFLSGYTAKVGSTEIGSTSAIQSTFSTCFGAPFFPRPAGVYAELLMKRIESFGSQVYLVNTGWTGGPHGVGKRFDIPTTRAIVDAIVSGELKDVETVHLDTLNLAVPVAVSGVDSNLLNPINTWGDKALYAEYAQKLAEAFTKNFAKYQVSDAIRNAGPKA</sequence>
<reference key="1">
    <citation type="submission" date="2008-12" db="EMBL/GenBank/DDBJ databases">
        <title>Complete sequence of chromosome of Shewanella baltica OS223.</title>
        <authorList>
            <consortium name="US DOE Joint Genome Institute"/>
            <person name="Lucas S."/>
            <person name="Copeland A."/>
            <person name="Lapidus A."/>
            <person name="Glavina del Rio T."/>
            <person name="Dalin E."/>
            <person name="Tice H."/>
            <person name="Bruce D."/>
            <person name="Goodwin L."/>
            <person name="Pitluck S."/>
            <person name="Chertkov O."/>
            <person name="Meincke L."/>
            <person name="Brettin T."/>
            <person name="Detter J.C."/>
            <person name="Han C."/>
            <person name="Kuske C.R."/>
            <person name="Larimer F."/>
            <person name="Land M."/>
            <person name="Hauser L."/>
            <person name="Kyrpides N."/>
            <person name="Ovchinnikova G."/>
            <person name="Brettar I."/>
            <person name="Rodrigues J."/>
            <person name="Konstantinidis K."/>
            <person name="Tiedje J."/>
        </authorList>
    </citation>
    <scope>NUCLEOTIDE SEQUENCE [LARGE SCALE GENOMIC DNA]</scope>
    <source>
        <strain>OS223</strain>
    </source>
</reference>
<dbReference type="EC" id="4.1.1.49" evidence="1"/>
<dbReference type="EMBL" id="CP001252">
    <property type="protein sequence ID" value="ACK44689.1"/>
    <property type="molecule type" value="Genomic_DNA"/>
</dbReference>
<dbReference type="RefSeq" id="WP_012586427.1">
    <property type="nucleotide sequence ID" value="NC_011663.1"/>
</dbReference>
<dbReference type="SMR" id="B8E3X7"/>
<dbReference type="KEGG" id="sbp:Sbal223_0148"/>
<dbReference type="HOGENOM" id="CLU_018247_0_1_6"/>
<dbReference type="UniPathway" id="UPA00138"/>
<dbReference type="Proteomes" id="UP000002507">
    <property type="component" value="Chromosome"/>
</dbReference>
<dbReference type="GO" id="GO:0005829">
    <property type="term" value="C:cytosol"/>
    <property type="evidence" value="ECO:0007669"/>
    <property type="project" value="TreeGrafter"/>
</dbReference>
<dbReference type="GO" id="GO:0005524">
    <property type="term" value="F:ATP binding"/>
    <property type="evidence" value="ECO:0007669"/>
    <property type="project" value="UniProtKB-UniRule"/>
</dbReference>
<dbReference type="GO" id="GO:0046872">
    <property type="term" value="F:metal ion binding"/>
    <property type="evidence" value="ECO:0007669"/>
    <property type="project" value="UniProtKB-KW"/>
</dbReference>
<dbReference type="GO" id="GO:0004612">
    <property type="term" value="F:phosphoenolpyruvate carboxykinase (ATP) activity"/>
    <property type="evidence" value="ECO:0007669"/>
    <property type="project" value="UniProtKB-UniRule"/>
</dbReference>
<dbReference type="GO" id="GO:0006094">
    <property type="term" value="P:gluconeogenesis"/>
    <property type="evidence" value="ECO:0007669"/>
    <property type="project" value="UniProtKB-UniRule"/>
</dbReference>
<dbReference type="CDD" id="cd00484">
    <property type="entry name" value="PEPCK_ATP"/>
    <property type="match status" value="1"/>
</dbReference>
<dbReference type="FunFam" id="2.170.8.10:FF:000001">
    <property type="entry name" value="Phosphoenolpyruvate carboxykinase (ATP)"/>
    <property type="match status" value="1"/>
</dbReference>
<dbReference type="Gene3D" id="3.90.228.20">
    <property type="match status" value="1"/>
</dbReference>
<dbReference type="Gene3D" id="3.40.449.10">
    <property type="entry name" value="Phosphoenolpyruvate Carboxykinase, domain 1"/>
    <property type="match status" value="1"/>
</dbReference>
<dbReference type="Gene3D" id="2.170.8.10">
    <property type="entry name" value="Phosphoenolpyruvate Carboxykinase, domain 2"/>
    <property type="match status" value="1"/>
</dbReference>
<dbReference type="HAMAP" id="MF_00453">
    <property type="entry name" value="PEPCK_ATP"/>
    <property type="match status" value="1"/>
</dbReference>
<dbReference type="InterPro" id="IPR001272">
    <property type="entry name" value="PEP_carboxykinase_ATP"/>
</dbReference>
<dbReference type="InterPro" id="IPR013035">
    <property type="entry name" value="PEP_carboxykinase_C"/>
</dbReference>
<dbReference type="InterPro" id="IPR008210">
    <property type="entry name" value="PEP_carboxykinase_N"/>
</dbReference>
<dbReference type="InterPro" id="IPR015994">
    <property type="entry name" value="PEPCK_ATP_CS"/>
</dbReference>
<dbReference type="NCBIfam" id="TIGR00224">
    <property type="entry name" value="pckA"/>
    <property type="match status" value="1"/>
</dbReference>
<dbReference type="NCBIfam" id="NF006820">
    <property type="entry name" value="PRK09344.1-2"/>
    <property type="match status" value="1"/>
</dbReference>
<dbReference type="NCBIfam" id="NF006821">
    <property type="entry name" value="PRK09344.1-3"/>
    <property type="match status" value="1"/>
</dbReference>
<dbReference type="NCBIfam" id="NF006823">
    <property type="entry name" value="PRK09344.1-5"/>
    <property type="match status" value="1"/>
</dbReference>
<dbReference type="PANTHER" id="PTHR30031:SF0">
    <property type="entry name" value="PHOSPHOENOLPYRUVATE CARBOXYKINASE (ATP)"/>
    <property type="match status" value="1"/>
</dbReference>
<dbReference type="PANTHER" id="PTHR30031">
    <property type="entry name" value="PHOSPHOENOLPYRUVATE CARBOXYKINASE ATP"/>
    <property type="match status" value="1"/>
</dbReference>
<dbReference type="Pfam" id="PF01293">
    <property type="entry name" value="PEPCK_ATP"/>
    <property type="match status" value="1"/>
</dbReference>
<dbReference type="PIRSF" id="PIRSF006294">
    <property type="entry name" value="PEP_crbxkin"/>
    <property type="match status" value="1"/>
</dbReference>
<dbReference type="SUPFAM" id="SSF68923">
    <property type="entry name" value="PEP carboxykinase N-terminal domain"/>
    <property type="match status" value="1"/>
</dbReference>
<dbReference type="SUPFAM" id="SSF53795">
    <property type="entry name" value="PEP carboxykinase-like"/>
    <property type="match status" value="1"/>
</dbReference>
<dbReference type="PROSITE" id="PS00532">
    <property type="entry name" value="PEPCK_ATP"/>
    <property type="match status" value="1"/>
</dbReference>
<evidence type="ECO:0000255" key="1">
    <source>
        <dbReference type="HAMAP-Rule" id="MF_00453"/>
    </source>
</evidence>
<organism>
    <name type="scientific">Shewanella baltica (strain OS223)</name>
    <dbReference type="NCBI Taxonomy" id="407976"/>
    <lineage>
        <taxon>Bacteria</taxon>
        <taxon>Pseudomonadati</taxon>
        <taxon>Pseudomonadota</taxon>
        <taxon>Gammaproteobacteria</taxon>
        <taxon>Alteromonadales</taxon>
        <taxon>Shewanellaceae</taxon>
        <taxon>Shewanella</taxon>
    </lineage>
</organism>